<organism>
    <name type="scientific">Macaca mulatta</name>
    <name type="common">Rhesus macaque</name>
    <dbReference type="NCBI Taxonomy" id="9544"/>
    <lineage>
        <taxon>Eukaryota</taxon>
        <taxon>Metazoa</taxon>
        <taxon>Chordata</taxon>
        <taxon>Craniata</taxon>
        <taxon>Vertebrata</taxon>
        <taxon>Euteleostomi</taxon>
        <taxon>Mammalia</taxon>
        <taxon>Eutheria</taxon>
        <taxon>Euarchontoglires</taxon>
        <taxon>Primates</taxon>
        <taxon>Haplorrhini</taxon>
        <taxon>Catarrhini</taxon>
        <taxon>Cercopithecidae</taxon>
        <taxon>Cercopithecinae</taxon>
        <taxon>Macaca</taxon>
    </lineage>
</organism>
<accession>Q07370</accession>
<accession>Q28494</accession>
<dbReference type="EMBL" id="U02293">
    <property type="protein sequence ID" value="AAA03391.1"/>
    <property type="molecule type" value="Unassigned_DNA"/>
</dbReference>
<dbReference type="EMBL" id="L16555">
    <property type="protein sequence ID" value="AAA20180.1"/>
    <property type="molecule type" value="mRNA"/>
</dbReference>
<dbReference type="PIR" id="I67411">
    <property type="entry name" value="I67411"/>
</dbReference>
<dbReference type="RefSeq" id="NP_001036204.1">
    <property type="nucleotide sequence ID" value="NM_001042739.1"/>
</dbReference>
<dbReference type="SMR" id="Q07370"/>
<dbReference type="STRING" id="9544.ENSMMUP00000034201"/>
<dbReference type="PaxDb" id="9544-ENSMMUP00000037859"/>
<dbReference type="GeneID" id="700885"/>
<dbReference type="KEGG" id="mcc:700885"/>
<dbReference type="CTD" id="102973055"/>
<dbReference type="eggNOG" id="ENOG502R5GJ">
    <property type="taxonomic scope" value="Eukaryota"/>
</dbReference>
<dbReference type="InParanoid" id="Q07370"/>
<dbReference type="OrthoDB" id="66010at9443"/>
<dbReference type="Proteomes" id="UP000006718">
    <property type="component" value="Unassembled WGS sequence"/>
</dbReference>
<dbReference type="GO" id="GO:0005615">
    <property type="term" value="C:extracellular space"/>
    <property type="evidence" value="ECO:0000318"/>
    <property type="project" value="GO_Central"/>
</dbReference>
<dbReference type="GO" id="GO:0008083">
    <property type="term" value="F:growth factor activity"/>
    <property type="evidence" value="ECO:0000318"/>
    <property type="project" value="GO_Central"/>
</dbReference>
<dbReference type="GO" id="GO:0005131">
    <property type="term" value="F:growth hormone receptor binding"/>
    <property type="evidence" value="ECO:0000318"/>
    <property type="project" value="GO_Central"/>
</dbReference>
<dbReference type="GO" id="GO:0005179">
    <property type="term" value="F:hormone activity"/>
    <property type="evidence" value="ECO:0000318"/>
    <property type="project" value="GO_Central"/>
</dbReference>
<dbReference type="GO" id="GO:0048513">
    <property type="term" value="P:animal organ development"/>
    <property type="evidence" value="ECO:0000318"/>
    <property type="project" value="GO_Central"/>
</dbReference>
<dbReference type="GO" id="GO:0060396">
    <property type="term" value="P:growth hormone receptor signaling pathway"/>
    <property type="evidence" value="ECO:0000318"/>
    <property type="project" value="GO_Central"/>
</dbReference>
<dbReference type="GO" id="GO:0046427">
    <property type="term" value="P:positive regulation of receptor signaling pathway via JAK-STAT"/>
    <property type="evidence" value="ECO:0000318"/>
    <property type="project" value="GO_Central"/>
</dbReference>
<dbReference type="GO" id="GO:0031667">
    <property type="term" value="P:response to nutrient levels"/>
    <property type="evidence" value="ECO:0000318"/>
    <property type="project" value="GO_Central"/>
</dbReference>
<dbReference type="CDD" id="cd10285">
    <property type="entry name" value="somatotropin_like"/>
    <property type="match status" value="1"/>
</dbReference>
<dbReference type="FunFam" id="1.20.1250.10:FF:000012">
    <property type="entry name" value="Growth hormone 1"/>
    <property type="match status" value="1"/>
</dbReference>
<dbReference type="Gene3D" id="1.20.1250.10">
    <property type="match status" value="1"/>
</dbReference>
<dbReference type="InterPro" id="IPR009079">
    <property type="entry name" value="4_helix_cytokine-like_core"/>
</dbReference>
<dbReference type="InterPro" id="IPR034975">
    <property type="entry name" value="Somatotropin"/>
</dbReference>
<dbReference type="InterPro" id="IPR001400">
    <property type="entry name" value="Somatotropin/Prolactin"/>
</dbReference>
<dbReference type="InterPro" id="IPR018116">
    <property type="entry name" value="Somatotropin_CS"/>
</dbReference>
<dbReference type="PANTHER" id="PTHR11417:SF2">
    <property type="entry name" value="SOMATOTROPIN"/>
    <property type="match status" value="1"/>
</dbReference>
<dbReference type="PANTHER" id="PTHR11417">
    <property type="entry name" value="SOMATOTROPIN,PROLACTIN"/>
    <property type="match status" value="1"/>
</dbReference>
<dbReference type="Pfam" id="PF00103">
    <property type="entry name" value="Hormone_1"/>
    <property type="match status" value="1"/>
</dbReference>
<dbReference type="PRINTS" id="PR00836">
    <property type="entry name" value="SOMATOTROPIN"/>
</dbReference>
<dbReference type="SUPFAM" id="SSF47266">
    <property type="entry name" value="4-helical cytokines"/>
    <property type="match status" value="1"/>
</dbReference>
<dbReference type="PROSITE" id="PS00266">
    <property type="entry name" value="SOMATOTROPIN_1"/>
    <property type="match status" value="1"/>
</dbReference>
<dbReference type="PROSITE" id="PS00338">
    <property type="entry name" value="SOMATOTROPIN_2"/>
    <property type="match status" value="1"/>
</dbReference>
<reference key="1">
    <citation type="submission" date="1994-01" db="EMBL/GenBank/DDBJ databases">
        <authorList>
            <person name="Golos T.G."/>
        </authorList>
    </citation>
    <scope>NUCLEOTIDE SEQUENCE</scope>
</reference>
<reference key="2">
    <citation type="journal article" date="1993" name="Endocrinology">
        <title>Cloning of four growth hormone/chorionic somatomammotropin-related complementary deoxyribonucleic acids differentially expressed during pregnancy in the rhesus monkey placenta.</title>
        <authorList>
            <person name="Golos T.G."/>
            <person name="Durning M."/>
            <person name="Fisher J.M."/>
            <person name="Fowler P.D."/>
        </authorList>
    </citation>
    <scope>NUCLEOTIDE SEQUENCE</scope>
    <source>
        <tissue>Placenta</tissue>
    </source>
</reference>
<feature type="signal peptide" evidence="1">
    <location>
        <begin position="1"/>
        <end position="26"/>
    </location>
</feature>
<feature type="chain" id="PRO_0000033062" description="Growth hormone variant">
    <location>
        <begin position="27"/>
        <end position="217"/>
    </location>
</feature>
<feature type="modified residue" description="Phosphoserine" evidence="2">
    <location>
        <position position="132"/>
    </location>
</feature>
<feature type="modified residue" description="Phosphoserine" evidence="2">
    <location>
        <position position="176"/>
    </location>
</feature>
<feature type="disulfide bond" evidence="1">
    <location>
        <begin position="79"/>
        <end position="191"/>
    </location>
</feature>
<feature type="disulfide bond" evidence="1">
    <location>
        <begin position="208"/>
        <end position="215"/>
    </location>
</feature>
<feature type="sequence conflict" description="In Ref. 2; AAA20180." evidence="3" ref="2">
    <original>L</original>
    <variation>F</variation>
    <location>
        <position position="57"/>
    </location>
</feature>
<feature type="sequence conflict" description="In Ref. 2; AAA20180." evidence="3" ref="2">
    <original>E</original>
    <variation>G</variation>
    <location>
        <position position="152"/>
    </location>
</feature>
<sequence length="217" mass="25221">MAAGSWTCLILAIALLCLPWLQEGSAFPTIPLSWLFNTAVFRAHHLHKLAFDTYPKLEEAYIPKEQKYSFLRNPQTSLCFSESIPTPSNKEETQQKSNLELLHISLLLIQSWLEPVQFLRSVFANHLVHTNSNFDIYLYLKKLEEGIQTLMERLEDGSPRTGQIFKETYSKYDTNSHNDDTLLKNYRLLYCFRKDMNKVETFLRTVRCRAVEGSCGF</sequence>
<protein>
    <recommendedName>
        <fullName>Growth hormone variant</fullName>
        <shortName>GH-V</shortName>
    </recommendedName>
    <alternativeName>
        <fullName>Growth hormone 2</fullName>
    </alternativeName>
    <alternativeName>
        <fullName>Placenta-specific growth hormone</fullName>
    </alternativeName>
</protein>
<name>SOM2_MACMU</name>
<proteinExistence type="evidence at transcript level"/>
<gene>
    <name type="primary">GH2</name>
</gene>
<keyword id="KW-1015">Disulfide bond</keyword>
<keyword id="KW-0372">Hormone</keyword>
<keyword id="KW-0597">Phosphoprotein</keyword>
<keyword id="KW-1185">Reference proteome</keyword>
<keyword id="KW-0964">Secreted</keyword>
<keyword id="KW-0732">Signal</keyword>
<evidence type="ECO:0000250" key="1"/>
<evidence type="ECO:0000250" key="2">
    <source>
        <dbReference type="UniProtKB" id="P01241"/>
    </source>
</evidence>
<evidence type="ECO:0000305" key="3"/>
<comment type="function">
    <text>Plays an important role in growth control. Its major role in stimulating body growth is to stimulate the liver and other tissues to secrete IGF1. It stimulates both the differentiation and proliferation of myoblasts. It also stimulates amino acid uptake and protein synthesis in muscle and other tissues.</text>
</comment>
<comment type="subcellular location">
    <subcellularLocation>
        <location evidence="1">Secreted</location>
    </subcellularLocation>
</comment>
<comment type="tissue specificity">
    <text>Expressed in the placenta.</text>
</comment>
<comment type="similarity">
    <text evidence="3">Belongs to the somatotropin/prolactin family.</text>
</comment>